<protein>
    <recommendedName>
        <fullName evidence="1">Small ribosomal subunit protein uS4</fullName>
    </recommendedName>
    <alternativeName>
        <fullName evidence="2">30S ribosomal protein S4</fullName>
    </alternativeName>
</protein>
<dbReference type="EMBL" id="AP010904">
    <property type="protein sequence ID" value="BAH74736.1"/>
    <property type="molecule type" value="Genomic_DNA"/>
</dbReference>
<dbReference type="RefSeq" id="WP_006920491.1">
    <property type="nucleotide sequence ID" value="NC_012796.1"/>
</dbReference>
<dbReference type="SMR" id="C4XLK2"/>
<dbReference type="STRING" id="573370.DMR_12450"/>
<dbReference type="KEGG" id="dma:DMR_12450"/>
<dbReference type="eggNOG" id="COG0522">
    <property type="taxonomic scope" value="Bacteria"/>
</dbReference>
<dbReference type="HOGENOM" id="CLU_092403_0_2_7"/>
<dbReference type="OrthoDB" id="9803672at2"/>
<dbReference type="Proteomes" id="UP000009071">
    <property type="component" value="Chromosome"/>
</dbReference>
<dbReference type="GO" id="GO:0015935">
    <property type="term" value="C:small ribosomal subunit"/>
    <property type="evidence" value="ECO:0007669"/>
    <property type="project" value="InterPro"/>
</dbReference>
<dbReference type="GO" id="GO:0019843">
    <property type="term" value="F:rRNA binding"/>
    <property type="evidence" value="ECO:0007669"/>
    <property type="project" value="UniProtKB-UniRule"/>
</dbReference>
<dbReference type="GO" id="GO:0003735">
    <property type="term" value="F:structural constituent of ribosome"/>
    <property type="evidence" value="ECO:0007669"/>
    <property type="project" value="InterPro"/>
</dbReference>
<dbReference type="GO" id="GO:0042274">
    <property type="term" value="P:ribosomal small subunit biogenesis"/>
    <property type="evidence" value="ECO:0007669"/>
    <property type="project" value="TreeGrafter"/>
</dbReference>
<dbReference type="GO" id="GO:0006412">
    <property type="term" value="P:translation"/>
    <property type="evidence" value="ECO:0007669"/>
    <property type="project" value="UniProtKB-UniRule"/>
</dbReference>
<dbReference type="CDD" id="cd00165">
    <property type="entry name" value="S4"/>
    <property type="match status" value="1"/>
</dbReference>
<dbReference type="FunFam" id="1.10.1050.10:FF:000001">
    <property type="entry name" value="30S ribosomal protein S4"/>
    <property type="match status" value="1"/>
</dbReference>
<dbReference type="FunFam" id="3.10.290.10:FF:000001">
    <property type="entry name" value="30S ribosomal protein S4"/>
    <property type="match status" value="1"/>
</dbReference>
<dbReference type="Gene3D" id="1.10.1050.10">
    <property type="entry name" value="Ribosomal Protein S4 Delta 41, Chain A, domain 1"/>
    <property type="match status" value="1"/>
</dbReference>
<dbReference type="Gene3D" id="3.10.290.10">
    <property type="entry name" value="RNA-binding S4 domain"/>
    <property type="match status" value="1"/>
</dbReference>
<dbReference type="HAMAP" id="MF_01306_B">
    <property type="entry name" value="Ribosomal_uS4_B"/>
    <property type="match status" value="1"/>
</dbReference>
<dbReference type="InterPro" id="IPR022801">
    <property type="entry name" value="Ribosomal_uS4"/>
</dbReference>
<dbReference type="InterPro" id="IPR005709">
    <property type="entry name" value="Ribosomal_uS4_bac-type"/>
</dbReference>
<dbReference type="InterPro" id="IPR018079">
    <property type="entry name" value="Ribosomal_uS4_CS"/>
</dbReference>
<dbReference type="InterPro" id="IPR001912">
    <property type="entry name" value="Ribosomal_uS4_N"/>
</dbReference>
<dbReference type="InterPro" id="IPR002942">
    <property type="entry name" value="S4_RNA-bd"/>
</dbReference>
<dbReference type="InterPro" id="IPR036986">
    <property type="entry name" value="S4_RNA-bd_sf"/>
</dbReference>
<dbReference type="NCBIfam" id="NF003717">
    <property type="entry name" value="PRK05327.1"/>
    <property type="match status" value="1"/>
</dbReference>
<dbReference type="NCBIfam" id="TIGR01017">
    <property type="entry name" value="rpsD_bact"/>
    <property type="match status" value="1"/>
</dbReference>
<dbReference type="PANTHER" id="PTHR11831">
    <property type="entry name" value="30S 40S RIBOSOMAL PROTEIN"/>
    <property type="match status" value="1"/>
</dbReference>
<dbReference type="PANTHER" id="PTHR11831:SF4">
    <property type="entry name" value="SMALL RIBOSOMAL SUBUNIT PROTEIN US4M"/>
    <property type="match status" value="1"/>
</dbReference>
<dbReference type="Pfam" id="PF00163">
    <property type="entry name" value="Ribosomal_S4"/>
    <property type="match status" value="1"/>
</dbReference>
<dbReference type="Pfam" id="PF01479">
    <property type="entry name" value="S4"/>
    <property type="match status" value="1"/>
</dbReference>
<dbReference type="SMART" id="SM01390">
    <property type="entry name" value="Ribosomal_S4"/>
    <property type="match status" value="1"/>
</dbReference>
<dbReference type="SMART" id="SM00363">
    <property type="entry name" value="S4"/>
    <property type="match status" value="1"/>
</dbReference>
<dbReference type="SUPFAM" id="SSF55174">
    <property type="entry name" value="Alpha-L RNA-binding motif"/>
    <property type="match status" value="1"/>
</dbReference>
<dbReference type="PROSITE" id="PS00632">
    <property type="entry name" value="RIBOSOMAL_S4"/>
    <property type="match status" value="1"/>
</dbReference>
<dbReference type="PROSITE" id="PS50889">
    <property type="entry name" value="S4"/>
    <property type="match status" value="1"/>
</dbReference>
<organism>
    <name type="scientific">Solidesulfovibrio magneticus (strain ATCC 700980 / DSM 13731 / RS-1)</name>
    <name type="common">Desulfovibrio magneticus</name>
    <dbReference type="NCBI Taxonomy" id="573370"/>
    <lineage>
        <taxon>Bacteria</taxon>
        <taxon>Pseudomonadati</taxon>
        <taxon>Thermodesulfobacteriota</taxon>
        <taxon>Desulfovibrionia</taxon>
        <taxon>Desulfovibrionales</taxon>
        <taxon>Desulfovibrionaceae</taxon>
        <taxon>Solidesulfovibrio</taxon>
    </lineage>
</organism>
<evidence type="ECO:0000255" key="1">
    <source>
        <dbReference type="HAMAP-Rule" id="MF_01306"/>
    </source>
</evidence>
<evidence type="ECO:0000305" key="2"/>
<keyword id="KW-0687">Ribonucleoprotein</keyword>
<keyword id="KW-0689">Ribosomal protein</keyword>
<keyword id="KW-0694">RNA-binding</keyword>
<keyword id="KW-0699">rRNA-binding</keyword>
<gene>
    <name evidence="1" type="primary">rpsD</name>
    <name type="ordered locus">DMR_12450</name>
</gene>
<feature type="chain" id="PRO_1000214285" description="Small ribosomal subunit protein uS4">
    <location>
        <begin position="1"/>
        <end position="208"/>
    </location>
</feature>
<feature type="domain" description="S4 RNA-binding" evidence="1">
    <location>
        <begin position="98"/>
        <end position="161"/>
    </location>
</feature>
<comment type="function">
    <text evidence="1">One of the primary rRNA binding proteins, it binds directly to 16S rRNA where it nucleates assembly of the body of the 30S subunit.</text>
</comment>
<comment type="function">
    <text evidence="1">With S5 and S12 plays an important role in translational accuracy.</text>
</comment>
<comment type="subunit">
    <text evidence="1">Part of the 30S ribosomal subunit. Contacts protein S5. The interaction surface between S4 and S5 is involved in control of translational fidelity.</text>
</comment>
<comment type="similarity">
    <text evidence="1">Belongs to the universal ribosomal protein uS4 family.</text>
</comment>
<accession>C4XLK2</accession>
<reference key="1">
    <citation type="journal article" date="2009" name="Genome Res.">
        <title>Whole genome sequence of Desulfovibrio magneticus strain RS-1 revealed common gene clusters in magnetotactic bacteria.</title>
        <authorList>
            <person name="Nakazawa H."/>
            <person name="Arakaki A."/>
            <person name="Narita-Yamada S."/>
            <person name="Yashiro I."/>
            <person name="Jinno K."/>
            <person name="Aoki N."/>
            <person name="Tsuruyama A."/>
            <person name="Okamura Y."/>
            <person name="Tanikawa S."/>
            <person name="Fujita N."/>
            <person name="Takeyama H."/>
            <person name="Matsunaga T."/>
        </authorList>
    </citation>
    <scope>NUCLEOTIDE SEQUENCE [LARGE SCALE GENOMIC DNA]</scope>
    <source>
        <strain>ATCC 700980 / DSM 13731 / RS-1</strain>
    </source>
</reference>
<sequence length="208" mass="24292">MARYTEAKCRICRREGAKLFLKGDRCYTDKCAHERRPYAPGQHGRIRKKMSDYAVQLREKQKTRKMYGILEEQFRDYFKRADMQKGVTGENLLSALERRLDNTIYRLGFATSRNQARQLVRHGLFTLNGRRVNIPSLQVKVGDVIEVRERNRQSPIILEAQQVIARRGTPAWLEVEGEKLKGKVIALPTREDVQFPINEQLIVELYSK</sequence>
<proteinExistence type="inferred from homology"/>
<name>RS4_SOLM1</name>